<comment type="function">
    <text evidence="1">Catalyzes the conversion of dihydroorotate to orotate with quinone as electron acceptor.</text>
</comment>
<comment type="catalytic activity">
    <reaction evidence="1">
        <text>(S)-dihydroorotate + a quinone = orotate + a quinol</text>
        <dbReference type="Rhea" id="RHEA:30187"/>
        <dbReference type="ChEBI" id="CHEBI:24646"/>
        <dbReference type="ChEBI" id="CHEBI:30839"/>
        <dbReference type="ChEBI" id="CHEBI:30864"/>
        <dbReference type="ChEBI" id="CHEBI:132124"/>
        <dbReference type="EC" id="1.3.5.2"/>
    </reaction>
</comment>
<comment type="cofactor">
    <cofactor evidence="1">
        <name>FMN</name>
        <dbReference type="ChEBI" id="CHEBI:58210"/>
    </cofactor>
    <text evidence="1">Binds 1 FMN per subunit.</text>
</comment>
<comment type="pathway">
    <text evidence="1">Pyrimidine metabolism; UMP biosynthesis via de novo pathway; orotate from (S)-dihydroorotate (quinone route): step 1/1.</text>
</comment>
<comment type="subunit">
    <text evidence="1">Monomer.</text>
</comment>
<comment type="subcellular location">
    <subcellularLocation>
        <location evidence="1">Cell membrane</location>
        <topology evidence="1">Peripheral membrane protein</topology>
    </subcellularLocation>
</comment>
<comment type="similarity">
    <text evidence="1">Belongs to the dihydroorotate dehydrogenase family. Type 2 subfamily.</text>
</comment>
<name>PYRD_NOCSJ</name>
<organism>
    <name type="scientific">Nocardioides sp. (strain ATCC BAA-499 / JS614)</name>
    <dbReference type="NCBI Taxonomy" id="196162"/>
    <lineage>
        <taxon>Bacteria</taxon>
        <taxon>Bacillati</taxon>
        <taxon>Actinomycetota</taxon>
        <taxon>Actinomycetes</taxon>
        <taxon>Propionibacteriales</taxon>
        <taxon>Nocardioidaceae</taxon>
        <taxon>Nocardioides</taxon>
    </lineage>
</organism>
<proteinExistence type="inferred from homology"/>
<sequence>MRGERGSKPSVYSLFFDGVLTRTDPERAHHGAFRAIRAARPVLASRRTPGEQVTALGLTFPNVLGLAAGFDKNAVGIDALAALGFGHVEIGTVTGEPQPGNPKPRLFRLPEDRAIVNRMGFNNDGAEVVARRLAERSRGRDRLGHRSRPVLGVNIGKSKVVPDDDQAAVEADYEKSARLLAPYADYLVVNVSSPNTPGLRNLQAVEKLRPLLEHVRRTADAVTRTRVPLLVKIAPDLADEDVLGVADLALAIGLDGIIATNTTISRAGLRTPADRVGEIGAGGLSGRPLTGRALEVLRLLRERVGPDLTLVGVGGISTVQDARDRLTAGADLLQAYSAFVYEGPLWPRRIVRGVA</sequence>
<reference key="1">
    <citation type="submission" date="2006-12" db="EMBL/GenBank/DDBJ databases">
        <title>Complete sequence of chromosome 1 of Nocardioides sp. JS614.</title>
        <authorList>
            <person name="Copeland A."/>
            <person name="Lucas S."/>
            <person name="Lapidus A."/>
            <person name="Barry K."/>
            <person name="Detter J.C."/>
            <person name="Glavina del Rio T."/>
            <person name="Hammon N."/>
            <person name="Israni S."/>
            <person name="Dalin E."/>
            <person name="Tice H."/>
            <person name="Pitluck S."/>
            <person name="Thompson L.S."/>
            <person name="Brettin T."/>
            <person name="Bruce D."/>
            <person name="Han C."/>
            <person name="Tapia R."/>
            <person name="Schmutz J."/>
            <person name="Larimer F."/>
            <person name="Land M."/>
            <person name="Hauser L."/>
            <person name="Kyrpides N."/>
            <person name="Kim E."/>
            <person name="Mattes T."/>
            <person name="Gossett J."/>
            <person name="Richardson P."/>
        </authorList>
    </citation>
    <scope>NUCLEOTIDE SEQUENCE [LARGE SCALE GENOMIC DNA]</scope>
    <source>
        <strain>ATCC BAA-499 / JS614</strain>
    </source>
</reference>
<gene>
    <name evidence="1" type="primary">pyrD</name>
    <name type="ordered locus">Noca_2432</name>
</gene>
<feature type="chain" id="PRO_0000336480" description="Dihydroorotate dehydrogenase (quinone)">
    <location>
        <begin position="1"/>
        <end position="355"/>
    </location>
</feature>
<feature type="active site" description="Nucleophile" evidence="1">
    <location>
        <position position="193"/>
    </location>
</feature>
<feature type="binding site" evidence="1">
    <location>
        <begin position="68"/>
        <end position="72"/>
    </location>
    <ligand>
        <name>FMN</name>
        <dbReference type="ChEBI" id="CHEBI:58210"/>
    </ligand>
</feature>
<feature type="binding site" evidence="1">
    <location>
        <position position="72"/>
    </location>
    <ligand>
        <name>substrate</name>
    </ligand>
</feature>
<feature type="binding site" evidence="1">
    <location>
        <position position="92"/>
    </location>
    <ligand>
        <name>FMN</name>
        <dbReference type="ChEBI" id="CHEBI:58210"/>
    </ligand>
</feature>
<feature type="binding site" evidence="1">
    <location>
        <begin position="117"/>
        <end position="121"/>
    </location>
    <ligand>
        <name>substrate</name>
    </ligand>
</feature>
<feature type="binding site" evidence="1">
    <location>
        <position position="154"/>
    </location>
    <ligand>
        <name>FMN</name>
        <dbReference type="ChEBI" id="CHEBI:58210"/>
    </ligand>
</feature>
<feature type="binding site" evidence="1">
    <location>
        <position position="190"/>
    </location>
    <ligand>
        <name>FMN</name>
        <dbReference type="ChEBI" id="CHEBI:58210"/>
    </ligand>
</feature>
<feature type="binding site" evidence="1">
    <location>
        <position position="190"/>
    </location>
    <ligand>
        <name>substrate</name>
    </ligand>
</feature>
<feature type="binding site" evidence="1">
    <location>
        <position position="195"/>
    </location>
    <ligand>
        <name>substrate</name>
    </ligand>
</feature>
<feature type="binding site" evidence="1">
    <location>
        <position position="232"/>
    </location>
    <ligand>
        <name>FMN</name>
        <dbReference type="ChEBI" id="CHEBI:58210"/>
    </ligand>
</feature>
<feature type="binding site" evidence="1">
    <location>
        <position position="260"/>
    </location>
    <ligand>
        <name>FMN</name>
        <dbReference type="ChEBI" id="CHEBI:58210"/>
    </ligand>
</feature>
<feature type="binding site" evidence="1">
    <location>
        <begin position="261"/>
        <end position="262"/>
    </location>
    <ligand>
        <name>substrate</name>
    </ligand>
</feature>
<feature type="binding site" evidence="1">
    <location>
        <position position="286"/>
    </location>
    <ligand>
        <name>FMN</name>
        <dbReference type="ChEBI" id="CHEBI:58210"/>
    </ligand>
</feature>
<feature type="binding site" evidence="1">
    <location>
        <position position="315"/>
    </location>
    <ligand>
        <name>FMN</name>
        <dbReference type="ChEBI" id="CHEBI:58210"/>
    </ligand>
</feature>
<feature type="binding site" evidence="1">
    <location>
        <begin position="336"/>
        <end position="337"/>
    </location>
    <ligand>
        <name>FMN</name>
        <dbReference type="ChEBI" id="CHEBI:58210"/>
    </ligand>
</feature>
<keyword id="KW-1003">Cell membrane</keyword>
<keyword id="KW-0285">Flavoprotein</keyword>
<keyword id="KW-0288">FMN</keyword>
<keyword id="KW-0472">Membrane</keyword>
<keyword id="KW-0560">Oxidoreductase</keyword>
<keyword id="KW-0665">Pyrimidine biosynthesis</keyword>
<keyword id="KW-1185">Reference proteome</keyword>
<dbReference type="EC" id="1.3.5.2" evidence="1"/>
<dbReference type="EMBL" id="CP000509">
    <property type="protein sequence ID" value="ABL81937.1"/>
    <property type="molecule type" value="Genomic_DNA"/>
</dbReference>
<dbReference type="RefSeq" id="WP_011755878.1">
    <property type="nucleotide sequence ID" value="NC_008699.1"/>
</dbReference>
<dbReference type="SMR" id="A1SJF2"/>
<dbReference type="STRING" id="196162.Noca_2432"/>
<dbReference type="KEGG" id="nca:Noca_2432"/>
<dbReference type="eggNOG" id="COG0167">
    <property type="taxonomic scope" value="Bacteria"/>
</dbReference>
<dbReference type="HOGENOM" id="CLU_013640_2_0_11"/>
<dbReference type="OrthoDB" id="9802377at2"/>
<dbReference type="UniPathway" id="UPA00070">
    <property type="reaction ID" value="UER00946"/>
</dbReference>
<dbReference type="Proteomes" id="UP000000640">
    <property type="component" value="Chromosome"/>
</dbReference>
<dbReference type="GO" id="GO:0005737">
    <property type="term" value="C:cytoplasm"/>
    <property type="evidence" value="ECO:0007669"/>
    <property type="project" value="InterPro"/>
</dbReference>
<dbReference type="GO" id="GO:0005886">
    <property type="term" value="C:plasma membrane"/>
    <property type="evidence" value="ECO:0007669"/>
    <property type="project" value="UniProtKB-SubCell"/>
</dbReference>
<dbReference type="GO" id="GO:0106430">
    <property type="term" value="F:dihydroorotate dehydrogenase (quinone) activity"/>
    <property type="evidence" value="ECO:0007669"/>
    <property type="project" value="UniProtKB-EC"/>
</dbReference>
<dbReference type="GO" id="GO:0006207">
    <property type="term" value="P:'de novo' pyrimidine nucleobase biosynthetic process"/>
    <property type="evidence" value="ECO:0007669"/>
    <property type="project" value="InterPro"/>
</dbReference>
<dbReference type="GO" id="GO:0044205">
    <property type="term" value="P:'de novo' UMP biosynthetic process"/>
    <property type="evidence" value="ECO:0007669"/>
    <property type="project" value="UniProtKB-UniRule"/>
</dbReference>
<dbReference type="CDD" id="cd04738">
    <property type="entry name" value="DHOD_2_like"/>
    <property type="match status" value="1"/>
</dbReference>
<dbReference type="Gene3D" id="3.20.20.70">
    <property type="entry name" value="Aldolase class I"/>
    <property type="match status" value="1"/>
</dbReference>
<dbReference type="HAMAP" id="MF_00225">
    <property type="entry name" value="DHO_dh_type2"/>
    <property type="match status" value="1"/>
</dbReference>
<dbReference type="InterPro" id="IPR013785">
    <property type="entry name" value="Aldolase_TIM"/>
</dbReference>
<dbReference type="InterPro" id="IPR050074">
    <property type="entry name" value="DHO_dehydrogenase"/>
</dbReference>
<dbReference type="InterPro" id="IPR012135">
    <property type="entry name" value="Dihydroorotate_DH_1_2"/>
</dbReference>
<dbReference type="InterPro" id="IPR005719">
    <property type="entry name" value="Dihydroorotate_DH_2"/>
</dbReference>
<dbReference type="InterPro" id="IPR005720">
    <property type="entry name" value="Dihydroorotate_DH_cat"/>
</dbReference>
<dbReference type="InterPro" id="IPR001295">
    <property type="entry name" value="Dihydroorotate_DH_CS"/>
</dbReference>
<dbReference type="NCBIfam" id="NF003648">
    <property type="entry name" value="PRK05286.2-1"/>
    <property type="match status" value="1"/>
</dbReference>
<dbReference type="NCBIfam" id="NF003652">
    <property type="entry name" value="PRK05286.2-5"/>
    <property type="match status" value="1"/>
</dbReference>
<dbReference type="NCBIfam" id="TIGR01036">
    <property type="entry name" value="pyrD_sub2"/>
    <property type="match status" value="1"/>
</dbReference>
<dbReference type="PANTHER" id="PTHR48109:SF4">
    <property type="entry name" value="DIHYDROOROTATE DEHYDROGENASE (QUINONE), MITOCHONDRIAL"/>
    <property type="match status" value="1"/>
</dbReference>
<dbReference type="PANTHER" id="PTHR48109">
    <property type="entry name" value="DIHYDROOROTATE DEHYDROGENASE (QUINONE), MITOCHONDRIAL-RELATED"/>
    <property type="match status" value="1"/>
</dbReference>
<dbReference type="Pfam" id="PF01180">
    <property type="entry name" value="DHO_dh"/>
    <property type="match status" value="1"/>
</dbReference>
<dbReference type="PIRSF" id="PIRSF000164">
    <property type="entry name" value="DHO_oxidase"/>
    <property type="match status" value="1"/>
</dbReference>
<dbReference type="SUPFAM" id="SSF51395">
    <property type="entry name" value="FMN-linked oxidoreductases"/>
    <property type="match status" value="1"/>
</dbReference>
<dbReference type="PROSITE" id="PS00911">
    <property type="entry name" value="DHODEHASE_1"/>
    <property type="match status" value="1"/>
</dbReference>
<dbReference type="PROSITE" id="PS00912">
    <property type="entry name" value="DHODEHASE_2"/>
    <property type="match status" value="1"/>
</dbReference>
<accession>A1SJF2</accession>
<evidence type="ECO:0000255" key="1">
    <source>
        <dbReference type="HAMAP-Rule" id="MF_00225"/>
    </source>
</evidence>
<protein>
    <recommendedName>
        <fullName evidence="1">Dihydroorotate dehydrogenase (quinone)</fullName>
        <ecNumber evidence="1">1.3.5.2</ecNumber>
    </recommendedName>
    <alternativeName>
        <fullName evidence="1">DHOdehase</fullName>
        <shortName evidence="1">DHOD</shortName>
        <shortName evidence="1">DHODase</shortName>
    </alternativeName>
    <alternativeName>
        <fullName evidence="1">Dihydroorotate oxidase</fullName>
    </alternativeName>
</protein>